<comment type="function">
    <text evidence="4">Isomerization of 3-trans,5-cis-dienoyl-CoA to 2-trans,4-trans-dienoyl-CoA.</text>
</comment>
<comment type="catalytic activity">
    <reaction evidence="4">
        <text>(3E,5Z)-octadienoyl-CoA = (2E,4E)-octadienoyl-CoA</text>
        <dbReference type="Rhea" id="RHEA:45244"/>
        <dbReference type="ChEBI" id="CHEBI:62243"/>
        <dbReference type="ChEBI" id="CHEBI:85108"/>
    </reaction>
</comment>
<comment type="catalytic activity">
    <reaction evidence="4">
        <text>(3E,5Z,8Z,11Z,14Z)-eicosapentaenoyl-CoA = (2E,4E,8Z,11Z,14Z)-eicosapentaenoyl-CoA</text>
        <dbReference type="Rhea" id="RHEA:45224"/>
        <dbReference type="ChEBI" id="CHEBI:85090"/>
        <dbReference type="ChEBI" id="CHEBI:85091"/>
    </reaction>
</comment>
<comment type="pathway">
    <text evidence="4">Lipid metabolism; fatty acid beta-oxidation.</text>
</comment>
<comment type="subunit">
    <text evidence="4">Homohexamer.</text>
</comment>
<comment type="subcellular location">
    <subcellularLocation>
        <location evidence="4">Mitochondrion</location>
    </subcellularLocation>
    <subcellularLocation>
        <location evidence="4">Peroxisome</location>
    </subcellularLocation>
</comment>
<comment type="similarity">
    <text evidence="6">Belongs to the enoyl-CoA hydratase/isomerase family.</text>
</comment>
<sequence>MAAGIVASRRLRDLLTRRLTASNYPGLSISLRLTGSPAQEEASGVALGEAPDHSYESLRVTSAQKHVLHVQLNRPNKRNAMNKVFWREMVECFNKISRDADCRAVVISGAGKMFTAGVDLMDMASDILQPKGDDVARISWYLRDIITRYQETFNVIEKCPKPVIAAVHGGCIGGGVDLVTACDIRYCAQDAFFQVKEVDVGLAADVGTLQRLPKVIGNQSLVNELAFTARKMMADEALGSGLVSRVFPDKEVMLDAALALAAEISSKSPVAVQSTKVNLLYSRDHSVAESLNYVASWNMSMLQTQDLMKSVQAATENKELKSVTFSKL</sequence>
<feature type="transit peptide" description="Mitochondrion" evidence="5">
    <location>
        <begin position="1"/>
        <end position="26"/>
    </location>
</feature>
<feature type="chain" id="PRO_0000042945" description="Delta(3,5)-Delta(2,4)-dienoyl-CoA isomerase, mitochondrial">
    <location>
        <begin position="27"/>
        <end position="328"/>
    </location>
</feature>
<feature type="short sequence motif" description="Microbody targeting signal" evidence="5">
    <location>
        <begin position="326"/>
        <end position="328"/>
    </location>
</feature>
<feature type="binding site" evidence="2">
    <location>
        <begin position="116"/>
        <end position="120"/>
    </location>
    <ligand>
        <name>substrate</name>
    </ligand>
</feature>
<feature type="binding site" evidence="2">
    <location>
        <position position="174"/>
    </location>
    <ligand>
        <name>substrate</name>
    </ligand>
</feature>
<feature type="site" description="Important for catalytic activity" evidence="2">
    <location>
        <position position="197"/>
    </location>
</feature>
<feature type="site" description="Important for catalytic activity" evidence="4">
    <location>
        <position position="205"/>
    </location>
</feature>
<feature type="modified residue" description="N6-succinyllysine" evidence="1">
    <location>
        <position position="231"/>
    </location>
</feature>
<feature type="modified residue" description="Phosphoserine" evidence="3">
    <location>
        <position position="268"/>
    </location>
</feature>
<feature type="modified residue" description="N6-acetyllysine" evidence="3">
    <location>
        <position position="327"/>
    </location>
</feature>
<dbReference type="EC" id="5.3.3.-" evidence="4"/>
<dbReference type="EMBL" id="CR857198">
    <property type="protein sequence ID" value="CAH89497.1"/>
    <property type="molecule type" value="mRNA"/>
</dbReference>
<dbReference type="RefSeq" id="NP_001124647.1">
    <property type="nucleotide sequence ID" value="NM_001131175.1"/>
</dbReference>
<dbReference type="SMR" id="Q5RFG0"/>
<dbReference type="FunCoup" id="Q5RFG0">
    <property type="interactions" value="1444"/>
</dbReference>
<dbReference type="STRING" id="9601.ENSPPYP00000011133"/>
<dbReference type="GeneID" id="100171488"/>
<dbReference type="KEGG" id="pon:100171488"/>
<dbReference type="CTD" id="1891"/>
<dbReference type="eggNOG" id="KOG1681">
    <property type="taxonomic scope" value="Eukaryota"/>
</dbReference>
<dbReference type="InParanoid" id="Q5RFG0"/>
<dbReference type="OrthoDB" id="14970at2759"/>
<dbReference type="UniPathway" id="UPA00659"/>
<dbReference type="Proteomes" id="UP000001595">
    <property type="component" value="Unplaced"/>
</dbReference>
<dbReference type="GO" id="GO:0005739">
    <property type="term" value="C:mitochondrion"/>
    <property type="evidence" value="ECO:0007669"/>
    <property type="project" value="UniProtKB-SubCell"/>
</dbReference>
<dbReference type="GO" id="GO:0005777">
    <property type="term" value="C:peroxisome"/>
    <property type="evidence" value="ECO:0007669"/>
    <property type="project" value="UniProtKB-SubCell"/>
</dbReference>
<dbReference type="GO" id="GO:0051750">
    <property type="term" value="F:delta(3,5)-delta(2,4)-dienoyl-CoA isomerase activity"/>
    <property type="evidence" value="ECO:0007669"/>
    <property type="project" value="TreeGrafter"/>
</dbReference>
<dbReference type="GO" id="GO:0006635">
    <property type="term" value="P:fatty acid beta-oxidation"/>
    <property type="evidence" value="ECO:0007669"/>
    <property type="project" value="UniProtKB-UniPathway"/>
</dbReference>
<dbReference type="CDD" id="cd06558">
    <property type="entry name" value="crotonase-like"/>
    <property type="match status" value="1"/>
</dbReference>
<dbReference type="FunFam" id="1.10.12.10:FF:000004">
    <property type="entry name" value="Delta3,5-delta2,4-dienoyl-CoA isomerase"/>
    <property type="match status" value="1"/>
</dbReference>
<dbReference type="FunFam" id="3.90.226.10:FF:000024">
    <property type="entry name" value="Delta3,5-delta2,4-dienoyl-CoA isomerase"/>
    <property type="match status" value="1"/>
</dbReference>
<dbReference type="Gene3D" id="3.90.226.10">
    <property type="entry name" value="2-enoyl-CoA Hydratase, Chain A, domain 1"/>
    <property type="match status" value="1"/>
</dbReference>
<dbReference type="Gene3D" id="1.10.12.10">
    <property type="entry name" value="Lyase 2-enoyl-coa Hydratase, Chain A, domain 2"/>
    <property type="match status" value="1"/>
</dbReference>
<dbReference type="InterPro" id="IPR029045">
    <property type="entry name" value="ClpP/crotonase-like_dom_sf"/>
</dbReference>
<dbReference type="InterPro" id="IPR045002">
    <property type="entry name" value="Ech1-like"/>
</dbReference>
<dbReference type="InterPro" id="IPR018376">
    <property type="entry name" value="Enoyl-CoA_hyd/isom_CS"/>
</dbReference>
<dbReference type="InterPro" id="IPR001753">
    <property type="entry name" value="Enoyl-CoA_hydra/iso"/>
</dbReference>
<dbReference type="InterPro" id="IPR014748">
    <property type="entry name" value="Enoyl-CoA_hydra_C"/>
</dbReference>
<dbReference type="NCBIfam" id="NF004794">
    <property type="entry name" value="PRK06142.1"/>
    <property type="match status" value="1"/>
</dbReference>
<dbReference type="PANTHER" id="PTHR43149:SF1">
    <property type="entry name" value="DELTA(3,5)-DELTA(2,4)-DIENOYL-COA ISOMERASE, MITOCHONDRIAL"/>
    <property type="match status" value="1"/>
</dbReference>
<dbReference type="PANTHER" id="PTHR43149">
    <property type="entry name" value="ENOYL-COA HYDRATASE"/>
    <property type="match status" value="1"/>
</dbReference>
<dbReference type="Pfam" id="PF00378">
    <property type="entry name" value="ECH_1"/>
    <property type="match status" value="1"/>
</dbReference>
<dbReference type="SUPFAM" id="SSF52096">
    <property type="entry name" value="ClpP/crotonase"/>
    <property type="match status" value="1"/>
</dbReference>
<dbReference type="PROSITE" id="PS00166">
    <property type="entry name" value="ENOYL_COA_HYDRATASE"/>
    <property type="match status" value="1"/>
</dbReference>
<proteinExistence type="evidence at transcript level"/>
<organism>
    <name type="scientific">Pongo abelii</name>
    <name type="common">Sumatran orangutan</name>
    <name type="synonym">Pongo pygmaeus abelii</name>
    <dbReference type="NCBI Taxonomy" id="9601"/>
    <lineage>
        <taxon>Eukaryota</taxon>
        <taxon>Metazoa</taxon>
        <taxon>Chordata</taxon>
        <taxon>Craniata</taxon>
        <taxon>Vertebrata</taxon>
        <taxon>Euteleostomi</taxon>
        <taxon>Mammalia</taxon>
        <taxon>Eutheria</taxon>
        <taxon>Euarchontoglires</taxon>
        <taxon>Primates</taxon>
        <taxon>Haplorrhini</taxon>
        <taxon>Catarrhini</taxon>
        <taxon>Hominidae</taxon>
        <taxon>Pongo</taxon>
    </lineage>
</organism>
<reference key="1">
    <citation type="submission" date="2004-11" db="EMBL/GenBank/DDBJ databases">
        <authorList>
            <consortium name="The German cDNA consortium"/>
        </authorList>
    </citation>
    <scope>NUCLEOTIDE SEQUENCE [LARGE SCALE MRNA]</scope>
    <source>
        <tissue>Heart</tissue>
    </source>
</reference>
<name>ECH1_PONAB</name>
<keyword id="KW-0007">Acetylation</keyword>
<keyword id="KW-0276">Fatty acid metabolism</keyword>
<keyword id="KW-0413">Isomerase</keyword>
<keyword id="KW-0443">Lipid metabolism</keyword>
<keyword id="KW-0496">Mitochondrion</keyword>
<keyword id="KW-0576">Peroxisome</keyword>
<keyword id="KW-0597">Phosphoprotein</keyword>
<keyword id="KW-1185">Reference proteome</keyword>
<keyword id="KW-0809">Transit peptide</keyword>
<accession>Q5RFG0</accession>
<gene>
    <name type="primary">ECH1</name>
</gene>
<evidence type="ECO:0000250" key="1">
    <source>
        <dbReference type="UniProtKB" id="O35459"/>
    </source>
</evidence>
<evidence type="ECO:0000250" key="2">
    <source>
        <dbReference type="UniProtKB" id="P42126"/>
    </source>
</evidence>
<evidence type="ECO:0000250" key="3">
    <source>
        <dbReference type="UniProtKB" id="Q13011"/>
    </source>
</evidence>
<evidence type="ECO:0000250" key="4">
    <source>
        <dbReference type="UniProtKB" id="Q62651"/>
    </source>
</evidence>
<evidence type="ECO:0000255" key="5"/>
<evidence type="ECO:0000305" key="6"/>
<protein>
    <recommendedName>
        <fullName evidence="6">Delta(3,5)-Delta(2,4)-dienoyl-CoA isomerase, mitochondrial</fullName>
        <ecNumber evidence="4">5.3.3.-</ecNumber>
    </recommendedName>
</protein>